<sequence length="101" mass="11582">MAKESMKAREAKRTKLVAKYAEKRAALKAIISDVNVSEEERWDAVLKLQQLPRDSSSSRQRNRCRVTGRPHGYLRKFGLSRIKLREAAMRGEVPGLKKASW</sequence>
<organism>
    <name type="scientific">Alteromonas mediterranea (strain DSM 17117 / CIP 110805 / LMG 28347 / Deep ecotype)</name>
    <dbReference type="NCBI Taxonomy" id="1774373"/>
    <lineage>
        <taxon>Bacteria</taxon>
        <taxon>Pseudomonadati</taxon>
        <taxon>Pseudomonadota</taxon>
        <taxon>Gammaproteobacteria</taxon>
        <taxon>Alteromonadales</taxon>
        <taxon>Alteromonadaceae</taxon>
        <taxon>Alteromonas/Salinimonas group</taxon>
        <taxon>Alteromonas</taxon>
    </lineage>
</organism>
<reference key="1">
    <citation type="journal article" date="2008" name="ISME J.">
        <title>Comparative genomics of two ecotypes of the marine planktonic copiotroph Alteromonas macleodii suggests alternative lifestyles associated with different kinds of particulate organic matter.</title>
        <authorList>
            <person name="Ivars-Martinez E."/>
            <person name="Martin-Cuadrado A.-B."/>
            <person name="D'Auria G."/>
            <person name="Mira A."/>
            <person name="Ferriera S."/>
            <person name="Johnson J."/>
            <person name="Friedman R."/>
            <person name="Rodriguez-Valera F."/>
        </authorList>
    </citation>
    <scope>NUCLEOTIDE SEQUENCE [LARGE SCALE GENOMIC DNA]</scope>
    <source>
        <strain>DSM 17117 / CIP 110805 / LMG 28347 / Deep ecotype</strain>
    </source>
</reference>
<proteinExistence type="inferred from homology"/>
<protein>
    <recommendedName>
        <fullName evidence="1">Small ribosomal subunit protein uS14</fullName>
    </recommendedName>
    <alternativeName>
        <fullName evidence="2">30S ribosomal protein S14</fullName>
    </alternativeName>
</protein>
<comment type="function">
    <text evidence="1">Binds 16S rRNA, required for the assembly of 30S particles and may also be responsible for determining the conformation of the 16S rRNA at the A site.</text>
</comment>
<comment type="subunit">
    <text evidence="1">Part of the 30S ribosomal subunit. Contacts proteins S3 and S10.</text>
</comment>
<comment type="similarity">
    <text evidence="1">Belongs to the universal ribosomal protein uS14 family.</text>
</comment>
<name>RS14_ALTMD</name>
<accession>B4RT41</accession>
<accession>F2GAJ9</accession>
<dbReference type="EMBL" id="CP001103">
    <property type="protein sequence ID" value="AEA98933.1"/>
    <property type="molecule type" value="Genomic_DNA"/>
</dbReference>
<dbReference type="RefSeq" id="WP_012519225.1">
    <property type="nucleotide sequence ID" value="NC_011138.3"/>
</dbReference>
<dbReference type="SMR" id="B4RT41"/>
<dbReference type="GeneID" id="56343833"/>
<dbReference type="KEGG" id="amc:MADE_1013995"/>
<dbReference type="HOGENOM" id="CLU_139869_0_1_6"/>
<dbReference type="Proteomes" id="UP000001870">
    <property type="component" value="Chromosome"/>
</dbReference>
<dbReference type="GO" id="GO:0005737">
    <property type="term" value="C:cytoplasm"/>
    <property type="evidence" value="ECO:0007669"/>
    <property type="project" value="UniProtKB-ARBA"/>
</dbReference>
<dbReference type="GO" id="GO:0015935">
    <property type="term" value="C:small ribosomal subunit"/>
    <property type="evidence" value="ECO:0007669"/>
    <property type="project" value="TreeGrafter"/>
</dbReference>
<dbReference type="GO" id="GO:0019843">
    <property type="term" value="F:rRNA binding"/>
    <property type="evidence" value="ECO:0007669"/>
    <property type="project" value="UniProtKB-UniRule"/>
</dbReference>
<dbReference type="GO" id="GO:0003735">
    <property type="term" value="F:structural constituent of ribosome"/>
    <property type="evidence" value="ECO:0007669"/>
    <property type="project" value="InterPro"/>
</dbReference>
<dbReference type="GO" id="GO:0006412">
    <property type="term" value="P:translation"/>
    <property type="evidence" value="ECO:0007669"/>
    <property type="project" value="UniProtKB-UniRule"/>
</dbReference>
<dbReference type="FunFam" id="1.10.287.1480:FF:000001">
    <property type="entry name" value="30S ribosomal protein S14"/>
    <property type="match status" value="1"/>
</dbReference>
<dbReference type="Gene3D" id="1.10.287.1480">
    <property type="match status" value="1"/>
</dbReference>
<dbReference type="HAMAP" id="MF_00537">
    <property type="entry name" value="Ribosomal_uS14_1"/>
    <property type="match status" value="1"/>
</dbReference>
<dbReference type="InterPro" id="IPR001209">
    <property type="entry name" value="Ribosomal_uS14"/>
</dbReference>
<dbReference type="InterPro" id="IPR023036">
    <property type="entry name" value="Ribosomal_uS14_bac/plastid"/>
</dbReference>
<dbReference type="InterPro" id="IPR018271">
    <property type="entry name" value="Ribosomal_uS14_CS"/>
</dbReference>
<dbReference type="NCBIfam" id="NF006477">
    <property type="entry name" value="PRK08881.1"/>
    <property type="match status" value="1"/>
</dbReference>
<dbReference type="PANTHER" id="PTHR19836">
    <property type="entry name" value="30S RIBOSOMAL PROTEIN S14"/>
    <property type="match status" value="1"/>
</dbReference>
<dbReference type="PANTHER" id="PTHR19836:SF19">
    <property type="entry name" value="SMALL RIBOSOMAL SUBUNIT PROTEIN US14M"/>
    <property type="match status" value="1"/>
</dbReference>
<dbReference type="Pfam" id="PF00253">
    <property type="entry name" value="Ribosomal_S14"/>
    <property type="match status" value="1"/>
</dbReference>
<dbReference type="SUPFAM" id="SSF57716">
    <property type="entry name" value="Glucocorticoid receptor-like (DNA-binding domain)"/>
    <property type="match status" value="1"/>
</dbReference>
<dbReference type="PROSITE" id="PS00527">
    <property type="entry name" value="RIBOSOMAL_S14"/>
    <property type="match status" value="1"/>
</dbReference>
<evidence type="ECO:0000255" key="1">
    <source>
        <dbReference type="HAMAP-Rule" id="MF_00537"/>
    </source>
</evidence>
<evidence type="ECO:0000305" key="2"/>
<keyword id="KW-0687">Ribonucleoprotein</keyword>
<keyword id="KW-0689">Ribosomal protein</keyword>
<keyword id="KW-0694">RNA-binding</keyword>
<keyword id="KW-0699">rRNA-binding</keyword>
<feature type="chain" id="PRO_1000128292" description="Small ribosomal subunit protein uS14">
    <location>
        <begin position="1"/>
        <end position="101"/>
    </location>
</feature>
<gene>
    <name evidence="1" type="primary">rpsN</name>
    <name type="ordered locus">MADE_1013995</name>
</gene>